<feature type="chain" id="PRO_1000084372" description="Ribosome rescue factor SmrB">
    <location>
        <begin position="1"/>
        <end position="176"/>
    </location>
</feature>
<feature type="domain" description="Smr" evidence="1">
    <location>
        <begin position="98"/>
        <end position="173"/>
    </location>
</feature>
<keyword id="KW-0255">Endonuclease</keyword>
<keyword id="KW-0378">Hydrolase</keyword>
<keyword id="KW-0540">Nuclease</keyword>
<keyword id="KW-0694">RNA-binding</keyword>
<keyword id="KW-0699">rRNA-binding</keyword>
<sequence length="176" mass="20094">MKKKYHLTPDELQLFKESIAGAKKLRQDTIVHHTPPKLGKKIAPERLLQEQVDASYYFSDEFQPLLDTDGPTRYVRPGVDNFEVKKLRRGDYSPEMFLDLHGLTQKQAKQELGALIAACKREHVHCACVMHGHGKHVLKQQTPLWMAQHPDVLAFHQAPKEWGGTAALLLLIELEE</sequence>
<proteinExistence type="inferred from homology"/>
<organism>
    <name type="scientific">Yersinia pseudotuberculosis serotype O:1b (strain IP 31758)</name>
    <dbReference type="NCBI Taxonomy" id="349747"/>
    <lineage>
        <taxon>Bacteria</taxon>
        <taxon>Pseudomonadati</taxon>
        <taxon>Pseudomonadota</taxon>
        <taxon>Gammaproteobacteria</taxon>
        <taxon>Enterobacterales</taxon>
        <taxon>Yersiniaceae</taxon>
        <taxon>Yersinia</taxon>
    </lineage>
</organism>
<name>SMRB_YERP3</name>
<evidence type="ECO:0000255" key="1">
    <source>
        <dbReference type="HAMAP-Rule" id="MF_01042"/>
    </source>
</evidence>
<reference key="1">
    <citation type="journal article" date="2007" name="PLoS Genet.">
        <title>The complete genome sequence of Yersinia pseudotuberculosis IP31758, the causative agent of Far East scarlet-like fever.</title>
        <authorList>
            <person name="Eppinger M."/>
            <person name="Rosovitz M.J."/>
            <person name="Fricke W.F."/>
            <person name="Rasko D.A."/>
            <person name="Kokorina G."/>
            <person name="Fayolle C."/>
            <person name="Lindler L.E."/>
            <person name="Carniel E."/>
            <person name="Ravel J."/>
        </authorList>
    </citation>
    <scope>NUCLEOTIDE SEQUENCE [LARGE SCALE GENOMIC DNA]</scope>
    <source>
        <strain>IP 31758</strain>
    </source>
</reference>
<accession>A7FGK4</accession>
<comment type="function">
    <text evidence="1">Acts as a ribosome collision sensor. Detects stalled/collided disomes (pairs of ribosomes where the leading ribosome is stalled and a second ribosome has collided with it) and endonucleolytically cleaves mRNA at the 5' boundary of the stalled ribosome. Stalled/collided disomes form a new interface (primarily via the 30S subunits) that binds SmrB. Cleaved mRNA becomes available for tmRNA ligation, leading to ribosomal subunit dissociation and rescue of stalled ribosomes.</text>
</comment>
<comment type="subunit">
    <text evidence="1">Associates with collided ribosomes, but not with correctly translating polysomes.</text>
</comment>
<comment type="similarity">
    <text evidence="1">Belongs to the SmrB family.</text>
</comment>
<protein>
    <recommendedName>
        <fullName evidence="1">Ribosome rescue factor SmrB</fullName>
        <ecNumber evidence="1">3.1.-.-</ecNumber>
    </recommendedName>
</protein>
<dbReference type="EC" id="3.1.-.-" evidence="1"/>
<dbReference type="EMBL" id="CP000720">
    <property type="protein sequence ID" value="ABS49835.1"/>
    <property type="molecule type" value="Genomic_DNA"/>
</dbReference>
<dbReference type="RefSeq" id="WP_002227846.1">
    <property type="nucleotide sequence ID" value="NC_009708.1"/>
</dbReference>
<dbReference type="SMR" id="A7FGK4"/>
<dbReference type="GeneID" id="57975940"/>
<dbReference type="KEGG" id="ypi:YpsIP31758_1403"/>
<dbReference type="HOGENOM" id="CLU_055978_4_0_6"/>
<dbReference type="Proteomes" id="UP000002412">
    <property type="component" value="Chromosome"/>
</dbReference>
<dbReference type="GO" id="GO:0004521">
    <property type="term" value="F:RNA endonuclease activity"/>
    <property type="evidence" value="ECO:0007669"/>
    <property type="project" value="UniProtKB-UniRule"/>
</dbReference>
<dbReference type="GO" id="GO:0019843">
    <property type="term" value="F:rRNA binding"/>
    <property type="evidence" value="ECO:0007669"/>
    <property type="project" value="UniProtKB-UniRule"/>
</dbReference>
<dbReference type="GO" id="GO:0072344">
    <property type="term" value="P:rescue of stalled ribosome"/>
    <property type="evidence" value="ECO:0007669"/>
    <property type="project" value="UniProtKB-UniRule"/>
</dbReference>
<dbReference type="Gene3D" id="3.30.1370.110">
    <property type="match status" value="1"/>
</dbReference>
<dbReference type="HAMAP" id="MF_01042">
    <property type="entry name" value="SmrB"/>
    <property type="match status" value="1"/>
</dbReference>
<dbReference type="InterPro" id="IPR002625">
    <property type="entry name" value="Smr_dom"/>
</dbReference>
<dbReference type="InterPro" id="IPR036063">
    <property type="entry name" value="Smr_dom_sf"/>
</dbReference>
<dbReference type="InterPro" id="IPR022990">
    <property type="entry name" value="SmrB-like"/>
</dbReference>
<dbReference type="NCBIfam" id="NF003432">
    <property type="entry name" value="PRK04946.1"/>
    <property type="match status" value="1"/>
</dbReference>
<dbReference type="PANTHER" id="PTHR35562">
    <property type="entry name" value="DNA ENDONUCLEASE SMRA-RELATED"/>
    <property type="match status" value="1"/>
</dbReference>
<dbReference type="PANTHER" id="PTHR35562:SF1">
    <property type="entry name" value="UPF0115 PROTEIN YFCN"/>
    <property type="match status" value="1"/>
</dbReference>
<dbReference type="Pfam" id="PF01713">
    <property type="entry name" value="Smr"/>
    <property type="match status" value="1"/>
</dbReference>
<dbReference type="SMART" id="SM00463">
    <property type="entry name" value="SMR"/>
    <property type="match status" value="1"/>
</dbReference>
<dbReference type="SUPFAM" id="SSF160443">
    <property type="entry name" value="SMR domain-like"/>
    <property type="match status" value="1"/>
</dbReference>
<dbReference type="PROSITE" id="PS50828">
    <property type="entry name" value="SMR"/>
    <property type="match status" value="1"/>
</dbReference>
<gene>
    <name evidence="1" type="primary">smrB</name>
    <name type="ordered locus">YpsIP31758_1403</name>
</gene>